<gene>
    <name evidence="1" type="primary">grpE</name>
    <name type="ordered locus">Bind_0337</name>
</gene>
<protein>
    <recommendedName>
        <fullName evidence="1">Protein GrpE</fullName>
    </recommendedName>
    <alternativeName>
        <fullName evidence="1">HSP-70 cofactor</fullName>
    </alternativeName>
</protein>
<dbReference type="EMBL" id="CP001016">
    <property type="protein sequence ID" value="ACB93991.1"/>
    <property type="molecule type" value="Genomic_DNA"/>
</dbReference>
<dbReference type="RefSeq" id="WP_012383349.1">
    <property type="nucleotide sequence ID" value="NC_010581.1"/>
</dbReference>
<dbReference type="SMR" id="B2IDD9"/>
<dbReference type="STRING" id="395963.Bind_0337"/>
<dbReference type="KEGG" id="bid:Bind_0337"/>
<dbReference type="eggNOG" id="COG0576">
    <property type="taxonomic scope" value="Bacteria"/>
</dbReference>
<dbReference type="HOGENOM" id="CLU_057217_6_2_5"/>
<dbReference type="OrthoDB" id="9789811at2"/>
<dbReference type="Proteomes" id="UP000001695">
    <property type="component" value="Chromosome"/>
</dbReference>
<dbReference type="GO" id="GO:0005737">
    <property type="term" value="C:cytoplasm"/>
    <property type="evidence" value="ECO:0007669"/>
    <property type="project" value="UniProtKB-SubCell"/>
</dbReference>
<dbReference type="GO" id="GO:0000774">
    <property type="term" value="F:adenyl-nucleotide exchange factor activity"/>
    <property type="evidence" value="ECO:0007669"/>
    <property type="project" value="InterPro"/>
</dbReference>
<dbReference type="GO" id="GO:0042803">
    <property type="term" value="F:protein homodimerization activity"/>
    <property type="evidence" value="ECO:0007669"/>
    <property type="project" value="InterPro"/>
</dbReference>
<dbReference type="GO" id="GO:0051087">
    <property type="term" value="F:protein-folding chaperone binding"/>
    <property type="evidence" value="ECO:0007669"/>
    <property type="project" value="InterPro"/>
</dbReference>
<dbReference type="GO" id="GO:0051082">
    <property type="term" value="F:unfolded protein binding"/>
    <property type="evidence" value="ECO:0007669"/>
    <property type="project" value="TreeGrafter"/>
</dbReference>
<dbReference type="GO" id="GO:0006457">
    <property type="term" value="P:protein folding"/>
    <property type="evidence" value="ECO:0007669"/>
    <property type="project" value="InterPro"/>
</dbReference>
<dbReference type="CDD" id="cd00446">
    <property type="entry name" value="GrpE"/>
    <property type="match status" value="1"/>
</dbReference>
<dbReference type="FunFam" id="2.30.22.10:FF:000001">
    <property type="entry name" value="Protein GrpE"/>
    <property type="match status" value="1"/>
</dbReference>
<dbReference type="Gene3D" id="3.90.20.20">
    <property type="match status" value="1"/>
</dbReference>
<dbReference type="Gene3D" id="2.30.22.10">
    <property type="entry name" value="Head domain of nucleotide exchange factor GrpE"/>
    <property type="match status" value="1"/>
</dbReference>
<dbReference type="HAMAP" id="MF_01151">
    <property type="entry name" value="GrpE"/>
    <property type="match status" value="1"/>
</dbReference>
<dbReference type="InterPro" id="IPR000740">
    <property type="entry name" value="GrpE"/>
</dbReference>
<dbReference type="InterPro" id="IPR013805">
    <property type="entry name" value="GrpE_coiled_coil"/>
</dbReference>
<dbReference type="InterPro" id="IPR009012">
    <property type="entry name" value="GrpE_head"/>
</dbReference>
<dbReference type="NCBIfam" id="NF010739">
    <property type="entry name" value="PRK14141.1"/>
    <property type="match status" value="1"/>
</dbReference>
<dbReference type="PANTHER" id="PTHR21237">
    <property type="entry name" value="GRPE PROTEIN"/>
    <property type="match status" value="1"/>
</dbReference>
<dbReference type="PANTHER" id="PTHR21237:SF23">
    <property type="entry name" value="GRPE PROTEIN HOMOLOG, MITOCHONDRIAL"/>
    <property type="match status" value="1"/>
</dbReference>
<dbReference type="Pfam" id="PF01025">
    <property type="entry name" value="GrpE"/>
    <property type="match status" value="1"/>
</dbReference>
<dbReference type="PRINTS" id="PR00773">
    <property type="entry name" value="GRPEPROTEIN"/>
</dbReference>
<dbReference type="SUPFAM" id="SSF58014">
    <property type="entry name" value="Coiled-coil domain of nucleotide exchange factor GrpE"/>
    <property type="match status" value="1"/>
</dbReference>
<dbReference type="SUPFAM" id="SSF51064">
    <property type="entry name" value="Head domain of nucleotide exchange factor GrpE"/>
    <property type="match status" value="1"/>
</dbReference>
<dbReference type="PROSITE" id="PS01071">
    <property type="entry name" value="GRPE"/>
    <property type="match status" value="1"/>
</dbReference>
<reference key="1">
    <citation type="journal article" date="2010" name="J. Bacteriol.">
        <title>Complete genome sequence of Beijerinckia indica subsp. indica.</title>
        <authorList>
            <person name="Tamas I."/>
            <person name="Dedysh S.N."/>
            <person name="Liesack W."/>
            <person name="Stott M.B."/>
            <person name="Alam M."/>
            <person name="Murrell J.C."/>
            <person name="Dunfield P.F."/>
        </authorList>
    </citation>
    <scope>NUCLEOTIDE SEQUENCE [LARGE SCALE GENOMIC DNA]</scope>
    <source>
        <strain>ATCC 9039 / DSM 1715 / NCIMB 8712</strain>
    </source>
</reference>
<organism>
    <name type="scientific">Beijerinckia indica subsp. indica (strain ATCC 9039 / DSM 1715 / NCIMB 8712)</name>
    <dbReference type="NCBI Taxonomy" id="395963"/>
    <lineage>
        <taxon>Bacteria</taxon>
        <taxon>Pseudomonadati</taxon>
        <taxon>Pseudomonadota</taxon>
        <taxon>Alphaproteobacteria</taxon>
        <taxon>Hyphomicrobiales</taxon>
        <taxon>Beijerinckiaceae</taxon>
        <taxon>Beijerinckia</taxon>
    </lineage>
</organism>
<feature type="chain" id="PRO_1000164178" description="Protein GrpE">
    <location>
        <begin position="1"/>
        <end position="201"/>
    </location>
</feature>
<feature type="region of interest" description="Disordered" evidence="2">
    <location>
        <begin position="1"/>
        <end position="40"/>
    </location>
</feature>
<feature type="compositionally biased region" description="Polar residues" evidence="2">
    <location>
        <begin position="1"/>
        <end position="11"/>
    </location>
</feature>
<comment type="function">
    <text evidence="1">Participates actively in the response to hyperosmotic and heat shock by preventing the aggregation of stress-denatured proteins, in association with DnaK and GrpE. It is the nucleotide exchange factor for DnaK and may function as a thermosensor. Unfolded proteins bind initially to DnaJ; upon interaction with the DnaJ-bound protein, DnaK hydrolyzes its bound ATP, resulting in the formation of a stable complex. GrpE releases ADP from DnaK; ATP binding to DnaK triggers the release of the substrate protein, thus completing the reaction cycle. Several rounds of ATP-dependent interactions between DnaJ, DnaK and GrpE are required for fully efficient folding.</text>
</comment>
<comment type="subunit">
    <text evidence="1">Homodimer.</text>
</comment>
<comment type="subcellular location">
    <subcellularLocation>
        <location evidence="1">Cytoplasm</location>
    </subcellularLocation>
</comment>
<comment type="similarity">
    <text evidence="1">Belongs to the GrpE family.</text>
</comment>
<proteinExistence type="inferred from homology"/>
<name>GRPE_BEII9</name>
<sequence>MTDSTNNQGTSGRPDDDHTTEEVASVFNDPGAQAPAGEPDPFVVLENLQLENAGLKDKVLRTYADMENLRRRSEKEVADAKLYGVTSFARDMLTFADNLHRAIESLPAEAKQAVDGPLKTFVEGIELTERDFLSRLAKYGVKKIEPLGNKFDPNLHEALFEIPDESVVSGTVKQVVEDGYVIGERVLRPAKVGVSRGGPKA</sequence>
<evidence type="ECO:0000255" key="1">
    <source>
        <dbReference type="HAMAP-Rule" id="MF_01151"/>
    </source>
</evidence>
<evidence type="ECO:0000256" key="2">
    <source>
        <dbReference type="SAM" id="MobiDB-lite"/>
    </source>
</evidence>
<keyword id="KW-0143">Chaperone</keyword>
<keyword id="KW-0963">Cytoplasm</keyword>
<keyword id="KW-1185">Reference proteome</keyword>
<keyword id="KW-0346">Stress response</keyword>
<accession>B2IDD9</accession>